<protein>
    <recommendedName>
        <fullName evidence="1">Ribonuclease HIII</fullName>
        <shortName evidence="1">RNase HIII</shortName>
        <ecNumber evidence="1">3.1.26.4</ecNumber>
    </recommendedName>
</protein>
<name>RNH3_LEUMM</name>
<comment type="function">
    <text evidence="1">Endonuclease that specifically degrades the RNA of RNA-DNA hybrids.</text>
</comment>
<comment type="catalytic activity">
    <reaction evidence="1">
        <text>Endonucleolytic cleavage to 5'-phosphomonoester.</text>
        <dbReference type="EC" id="3.1.26.4"/>
    </reaction>
</comment>
<comment type="cofactor">
    <cofactor evidence="1">
        <name>Mn(2+)</name>
        <dbReference type="ChEBI" id="CHEBI:29035"/>
    </cofactor>
    <cofactor evidence="1">
        <name>Mg(2+)</name>
        <dbReference type="ChEBI" id="CHEBI:18420"/>
    </cofactor>
    <text evidence="1">Manganese or magnesium. Binds 1 divalent metal ion per monomer in the absence of substrate. May bind a second metal ion after substrate binding.</text>
</comment>
<comment type="subcellular location">
    <subcellularLocation>
        <location evidence="1">Cytoplasm</location>
    </subcellularLocation>
</comment>
<comment type="similarity">
    <text evidence="1">Belongs to the RNase HII family. RnhC subfamily.</text>
</comment>
<accession>Q03VG4</accession>
<gene>
    <name evidence="1" type="primary">rnhC</name>
    <name type="ordered locus">LEUM_1721</name>
</gene>
<feature type="chain" id="PRO_1000031233" description="Ribonuclease HIII">
    <location>
        <begin position="1"/>
        <end position="303"/>
    </location>
</feature>
<feature type="domain" description="RNase H type-2" evidence="2">
    <location>
        <begin position="89"/>
        <end position="303"/>
    </location>
</feature>
<feature type="binding site" evidence="1">
    <location>
        <position position="95"/>
    </location>
    <ligand>
        <name>a divalent metal cation</name>
        <dbReference type="ChEBI" id="CHEBI:60240"/>
    </ligand>
</feature>
<feature type="binding site" evidence="1">
    <location>
        <position position="96"/>
    </location>
    <ligand>
        <name>a divalent metal cation</name>
        <dbReference type="ChEBI" id="CHEBI:60240"/>
    </ligand>
</feature>
<feature type="binding site" evidence="1">
    <location>
        <position position="199"/>
    </location>
    <ligand>
        <name>a divalent metal cation</name>
        <dbReference type="ChEBI" id="CHEBI:60240"/>
    </ligand>
</feature>
<evidence type="ECO:0000255" key="1">
    <source>
        <dbReference type="HAMAP-Rule" id="MF_00053"/>
    </source>
</evidence>
<evidence type="ECO:0000255" key="2">
    <source>
        <dbReference type="PROSITE-ProRule" id="PRU01319"/>
    </source>
</evidence>
<proteinExistence type="inferred from homology"/>
<dbReference type="EC" id="3.1.26.4" evidence="1"/>
<dbReference type="EMBL" id="CP000414">
    <property type="protein sequence ID" value="ABJ62808.1"/>
    <property type="molecule type" value="Genomic_DNA"/>
</dbReference>
<dbReference type="RefSeq" id="WP_011680329.1">
    <property type="nucleotide sequence ID" value="NC_008531.1"/>
</dbReference>
<dbReference type="SMR" id="Q03VG4"/>
<dbReference type="EnsemblBacteria" id="ABJ62808">
    <property type="protein sequence ID" value="ABJ62808"/>
    <property type="gene ID" value="LEUM_1721"/>
</dbReference>
<dbReference type="GeneID" id="29577083"/>
<dbReference type="KEGG" id="lme:LEUM_1721"/>
<dbReference type="eggNOG" id="COG1039">
    <property type="taxonomic scope" value="Bacteria"/>
</dbReference>
<dbReference type="HOGENOM" id="CLU_059546_1_0_9"/>
<dbReference type="Proteomes" id="UP000000362">
    <property type="component" value="Chromosome"/>
</dbReference>
<dbReference type="GO" id="GO:0005737">
    <property type="term" value="C:cytoplasm"/>
    <property type="evidence" value="ECO:0007669"/>
    <property type="project" value="UniProtKB-SubCell"/>
</dbReference>
<dbReference type="GO" id="GO:0032299">
    <property type="term" value="C:ribonuclease H2 complex"/>
    <property type="evidence" value="ECO:0007669"/>
    <property type="project" value="TreeGrafter"/>
</dbReference>
<dbReference type="GO" id="GO:0000287">
    <property type="term" value="F:magnesium ion binding"/>
    <property type="evidence" value="ECO:0007669"/>
    <property type="project" value="UniProtKB-UniRule"/>
</dbReference>
<dbReference type="GO" id="GO:0003723">
    <property type="term" value="F:RNA binding"/>
    <property type="evidence" value="ECO:0007669"/>
    <property type="project" value="InterPro"/>
</dbReference>
<dbReference type="GO" id="GO:0004523">
    <property type="term" value="F:RNA-DNA hybrid ribonuclease activity"/>
    <property type="evidence" value="ECO:0007669"/>
    <property type="project" value="UniProtKB-UniRule"/>
</dbReference>
<dbReference type="GO" id="GO:0043137">
    <property type="term" value="P:DNA replication, removal of RNA primer"/>
    <property type="evidence" value="ECO:0007669"/>
    <property type="project" value="TreeGrafter"/>
</dbReference>
<dbReference type="GO" id="GO:0006298">
    <property type="term" value="P:mismatch repair"/>
    <property type="evidence" value="ECO:0007669"/>
    <property type="project" value="TreeGrafter"/>
</dbReference>
<dbReference type="CDD" id="cd06590">
    <property type="entry name" value="RNase_HII_bacteria_HIII_like"/>
    <property type="match status" value="1"/>
</dbReference>
<dbReference type="CDD" id="cd14796">
    <property type="entry name" value="RNAse_HIII_N"/>
    <property type="match status" value="1"/>
</dbReference>
<dbReference type="FunFam" id="3.30.420.10:FF:000047">
    <property type="entry name" value="Ribonuclease HIII"/>
    <property type="match status" value="1"/>
</dbReference>
<dbReference type="Gene3D" id="3.30.420.10">
    <property type="entry name" value="Ribonuclease H-like superfamily/Ribonuclease H"/>
    <property type="match status" value="1"/>
</dbReference>
<dbReference type="Gene3D" id="3.30.310.10">
    <property type="entry name" value="TATA-Binding Protein"/>
    <property type="match status" value="1"/>
</dbReference>
<dbReference type="HAMAP" id="MF_00053">
    <property type="entry name" value="RNase_HIII"/>
    <property type="match status" value="1"/>
</dbReference>
<dbReference type="InterPro" id="IPR001352">
    <property type="entry name" value="RNase_HII/HIII"/>
</dbReference>
<dbReference type="InterPro" id="IPR024567">
    <property type="entry name" value="RNase_HII/HIII_dom"/>
</dbReference>
<dbReference type="InterPro" id="IPR004641">
    <property type="entry name" value="RNase_HIII"/>
</dbReference>
<dbReference type="InterPro" id="IPR024568">
    <property type="entry name" value="RNase_HIII_N"/>
</dbReference>
<dbReference type="InterPro" id="IPR012337">
    <property type="entry name" value="RNaseH-like_sf"/>
</dbReference>
<dbReference type="InterPro" id="IPR036397">
    <property type="entry name" value="RNaseH_sf"/>
</dbReference>
<dbReference type="InterPro" id="IPR012295">
    <property type="entry name" value="TBP_dom_sf"/>
</dbReference>
<dbReference type="NCBIfam" id="TIGR00716">
    <property type="entry name" value="rnhC"/>
    <property type="match status" value="1"/>
</dbReference>
<dbReference type="PANTHER" id="PTHR10954:SF23">
    <property type="entry name" value="RIBONUCLEASE"/>
    <property type="match status" value="1"/>
</dbReference>
<dbReference type="PANTHER" id="PTHR10954">
    <property type="entry name" value="RIBONUCLEASE H2 SUBUNIT A"/>
    <property type="match status" value="1"/>
</dbReference>
<dbReference type="Pfam" id="PF11858">
    <property type="entry name" value="DUF3378"/>
    <property type="match status" value="1"/>
</dbReference>
<dbReference type="Pfam" id="PF01351">
    <property type="entry name" value="RNase_HII"/>
    <property type="match status" value="1"/>
</dbReference>
<dbReference type="PIRSF" id="PIRSF037748">
    <property type="entry name" value="RnhC"/>
    <property type="match status" value="1"/>
</dbReference>
<dbReference type="SUPFAM" id="SSF53098">
    <property type="entry name" value="Ribonuclease H-like"/>
    <property type="match status" value="1"/>
</dbReference>
<dbReference type="PROSITE" id="PS51975">
    <property type="entry name" value="RNASE_H_2"/>
    <property type="match status" value="1"/>
</dbReference>
<organism>
    <name type="scientific">Leuconostoc mesenteroides subsp. mesenteroides (strain ATCC 8293 / DSM 20343 / BCRC 11652 / CCM 1803 / JCM 6124 / NCDO 523 / NBRC 100496 / NCIMB 8023 / NCTC 12954 / NRRL B-1118 / 37Y)</name>
    <dbReference type="NCBI Taxonomy" id="203120"/>
    <lineage>
        <taxon>Bacteria</taxon>
        <taxon>Bacillati</taxon>
        <taxon>Bacillota</taxon>
        <taxon>Bacilli</taxon>
        <taxon>Lactobacillales</taxon>
        <taxon>Lactobacillaceae</taxon>
        <taxon>Leuconostoc</taxon>
    </lineage>
</organism>
<sequence>MQKVIQVNNQKLKQMAHYYSQFSSKKVPTGALFSISSGSATVTGYYSGKVMFQGKTASAEAAKWQSNSIHSLDTPKKMSTTLPADFANWSVLGSDEVGAGAYFGPLTTAAVYVSQENLEWVRALGIADSKTLTDDRMKKIAPQIIAKLPHHVVNLMPEKYNQLQPLHNVNQMKAISHNFALGKVLDKISPITPQAILIDQFAQQSTYFNYLKNAKQQRIIHENVYFTTKGEQYHLSVAAASILARVVELDAMSKLSVEAGIKLPIGAGREVDTVAAELLRRGIDLKHYAKLHFANTKKAERLL</sequence>
<reference key="1">
    <citation type="journal article" date="2006" name="Proc. Natl. Acad. Sci. U.S.A.">
        <title>Comparative genomics of the lactic acid bacteria.</title>
        <authorList>
            <person name="Makarova K.S."/>
            <person name="Slesarev A."/>
            <person name="Wolf Y.I."/>
            <person name="Sorokin A."/>
            <person name="Mirkin B."/>
            <person name="Koonin E.V."/>
            <person name="Pavlov A."/>
            <person name="Pavlova N."/>
            <person name="Karamychev V."/>
            <person name="Polouchine N."/>
            <person name="Shakhova V."/>
            <person name="Grigoriev I."/>
            <person name="Lou Y."/>
            <person name="Rohksar D."/>
            <person name="Lucas S."/>
            <person name="Huang K."/>
            <person name="Goodstein D.M."/>
            <person name="Hawkins T."/>
            <person name="Plengvidhya V."/>
            <person name="Welker D."/>
            <person name="Hughes J."/>
            <person name="Goh Y."/>
            <person name="Benson A."/>
            <person name="Baldwin K."/>
            <person name="Lee J.-H."/>
            <person name="Diaz-Muniz I."/>
            <person name="Dosti B."/>
            <person name="Smeianov V."/>
            <person name="Wechter W."/>
            <person name="Barabote R."/>
            <person name="Lorca G."/>
            <person name="Altermann E."/>
            <person name="Barrangou R."/>
            <person name="Ganesan B."/>
            <person name="Xie Y."/>
            <person name="Rawsthorne H."/>
            <person name="Tamir D."/>
            <person name="Parker C."/>
            <person name="Breidt F."/>
            <person name="Broadbent J.R."/>
            <person name="Hutkins R."/>
            <person name="O'Sullivan D."/>
            <person name="Steele J."/>
            <person name="Unlu G."/>
            <person name="Saier M.H. Jr."/>
            <person name="Klaenhammer T."/>
            <person name="Richardson P."/>
            <person name="Kozyavkin S."/>
            <person name="Weimer B.C."/>
            <person name="Mills D.A."/>
        </authorList>
    </citation>
    <scope>NUCLEOTIDE SEQUENCE [LARGE SCALE GENOMIC DNA]</scope>
    <source>
        <strain>ATCC 8293 / DSM 20343 / BCRC 11652 / CCM 1803 / JCM 6124 / NCDO 523 / NBRC 100496 / NCIMB 8023 / NCTC 12954 / NRRL B-1118 / 37Y</strain>
    </source>
</reference>
<keyword id="KW-0963">Cytoplasm</keyword>
<keyword id="KW-0255">Endonuclease</keyword>
<keyword id="KW-0378">Hydrolase</keyword>
<keyword id="KW-0460">Magnesium</keyword>
<keyword id="KW-0479">Metal-binding</keyword>
<keyword id="KW-0540">Nuclease</keyword>
<keyword id="KW-1185">Reference proteome</keyword>